<proteinExistence type="inferred from homology"/>
<keyword id="KW-0067">ATP-binding</keyword>
<keyword id="KW-0143">Chaperone</keyword>
<keyword id="KW-0175">Coiled coil</keyword>
<keyword id="KW-0963">Cytoplasm</keyword>
<keyword id="KW-0547">Nucleotide-binding</keyword>
<keyword id="KW-0677">Repeat</keyword>
<keyword id="KW-0346">Stress response</keyword>
<name>CLPB_STAAR</name>
<sequence>MDINKMTYAVQSALQQAVELSQQHKLQNIEIEAILSAALNESESLYKSILERANIEVDQLNKAYEDKLNTYASVEGDNIQYGQYISQQANQLITKAESYMKEYEDEYISMEHILRSAMDIDQTTKHYINNKVEVIKEIIKKVRGGNHVTSQNPEVNYEALAKYGRDLVEEVRQGKMDPVIGRDEEIRNTIRILSRKTKNNPVLIGEPGVGKTAIVEGLAQRIVKKDVPESLLDKTVFELDLSALVAGAKYRGEFEERLKAVLKEVKESDGRIILFIDEIHMLVGAGKTDGAMDAGNMLKPMLARGELHCIGATTLNEYREYIEKDSALERRFQKVAVSEPDVEDTISILRGLKERYEVYHGVRIQDRALVAAAELSDRYITDRFLPDKAIDLVDQACATIRTEMGSNPTELDQVNRRVMQLEIEESALKNESDNASKQRLQELQEELANEKEKQAALQSRVESEKEKIANLQEKRAQLDESRQALEDAQTNNNLEKAAELQYGTIPQLEKELRELEDNFQDEQGEDSDRMIREVVTDEEIGDIVSQWTGIPVSKLVETEREKLLHLSDILHKRVVGQDKAVDLVSDAVVRARAGIKDPNRPIGSFLFLGPTGVGKTELAKSLAASLFDSEKHMIRIDMSEYMEKHAVSRLIGAPPGYIGHDEGGQLTEAVRRNPYSVILLDEVEKAHTDVFNVLLQILDEGRLTDSKGRSVDFKNTIIIMTSNIGSQVLLENVKETGEITESTEKAVMTSLNAYFKPEILNRMDDIVLFKPLSIDDMSMIVDKILTQLNIRLLEQRISIEVSDDAKAWLGQEAYEPQYGARPLKRFVQRQIETPLARMMIKEGFPEGTTIKVNLNSDNNLTFNVEKIHE</sequence>
<comment type="function">
    <text evidence="1">Part of a stress-induced multi-chaperone system, it is involved in the recovery of the cell from heat-induced damage, in cooperation with DnaK, DnaJ and GrpE. Acts before DnaK, in the processing of protein aggregates. Protein binding stimulates the ATPase activity; ATP hydrolysis unfolds the denatured protein aggregates, which probably helps expose new hydrophobic binding sites on the surface of ClpB-bound aggregates, contributing to the solubilization and refolding of denatured protein aggregates by DnaK (By similarity).</text>
</comment>
<comment type="subunit">
    <text evidence="1">Homohexamer. The oligomerization is ATP-dependent (By similarity).</text>
</comment>
<comment type="subcellular location">
    <subcellularLocation>
        <location evidence="4">Cytoplasm</location>
    </subcellularLocation>
</comment>
<comment type="domain">
    <text evidence="1">The Clp repeat (R) domain probably functions as a substrate-discriminating domain, recruiting aggregated proteins to the ClpB hexamer and/or stabilizing bound proteins. The NBD2 domain is responsible for oligomerization, whereas the NBD1 domain stabilizes the hexamer probably in an ATP-dependent manner. The movement of the coiled-coil domain is essential for ClpB ability to rescue proteins from an aggregated state, probably by pulling apart large aggregated proteins, which are bound between the coiled-coils motifs of adjacent ClpB subunits in the functional hexamer (By similarity).</text>
</comment>
<comment type="similarity">
    <text evidence="4">Belongs to the ClpA/ClpB family.</text>
</comment>
<organism>
    <name type="scientific">Staphylococcus aureus (strain MRSA252)</name>
    <dbReference type="NCBI Taxonomy" id="282458"/>
    <lineage>
        <taxon>Bacteria</taxon>
        <taxon>Bacillati</taxon>
        <taxon>Bacillota</taxon>
        <taxon>Bacilli</taxon>
        <taxon>Bacillales</taxon>
        <taxon>Staphylococcaceae</taxon>
        <taxon>Staphylococcus</taxon>
    </lineage>
</organism>
<protein>
    <recommendedName>
        <fullName>Chaperone protein ClpB</fullName>
    </recommendedName>
</protein>
<accession>Q6GIB2</accession>
<dbReference type="EMBL" id="BX571856">
    <property type="protein sequence ID" value="CAG39944.1"/>
    <property type="molecule type" value="Genomic_DNA"/>
</dbReference>
<dbReference type="RefSeq" id="WP_000353950.1">
    <property type="nucleotide sequence ID" value="NC_002952.2"/>
</dbReference>
<dbReference type="SMR" id="Q6GIB2"/>
<dbReference type="KEGG" id="sar:SAR0938"/>
<dbReference type="HOGENOM" id="CLU_005070_4_0_9"/>
<dbReference type="Proteomes" id="UP000000596">
    <property type="component" value="Chromosome"/>
</dbReference>
<dbReference type="GO" id="GO:0005737">
    <property type="term" value="C:cytoplasm"/>
    <property type="evidence" value="ECO:0007669"/>
    <property type="project" value="UniProtKB-SubCell"/>
</dbReference>
<dbReference type="GO" id="GO:0005524">
    <property type="term" value="F:ATP binding"/>
    <property type="evidence" value="ECO:0007669"/>
    <property type="project" value="UniProtKB-KW"/>
</dbReference>
<dbReference type="GO" id="GO:0016887">
    <property type="term" value="F:ATP hydrolysis activity"/>
    <property type="evidence" value="ECO:0007669"/>
    <property type="project" value="InterPro"/>
</dbReference>
<dbReference type="GO" id="GO:0034605">
    <property type="term" value="P:cellular response to heat"/>
    <property type="evidence" value="ECO:0007669"/>
    <property type="project" value="TreeGrafter"/>
</dbReference>
<dbReference type="GO" id="GO:0042026">
    <property type="term" value="P:protein refolding"/>
    <property type="evidence" value="ECO:0007669"/>
    <property type="project" value="InterPro"/>
</dbReference>
<dbReference type="CDD" id="cd00009">
    <property type="entry name" value="AAA"/>
    <property type="match status" value="1"/>
</dbReference>
<dbReference type="CDD" id="cd19499">
    <property type="entry name" value="RecA-like_ClpB_Hsp104-like"/>
    <property type="match status" value="1"/>
</dbReference>
<dbReference type="FunFam" id="3.40.50.300:FF:000120">
    <property type="entry name" value="ATP-dependent chaperone ClpB"/>
    <property type="match status" value="1"/>
</dbReference>
<dbReference type="FunFam" id="3.40.50.300:FF:000025">
    <property type="entry name" value="ATP-dependent Clp protease subunit"/>
    <property type="match status" value="1"/>
</dbReference>
<dbReference type="FunFam" id="3.40.50.300:FF:000010">
    <property type="entry name" value="Chaperone clpB 1, putative"/>
    <property type="match status" value="1"/>
</dbReference>
<dbReference type="Gene3D" id="1.10.8.60">
    <property type="match status" value="1"/>
</dbReference>
<dbReference type="Gene3D" id="1.10.1780.10">
    <property type="entry name" value="Clp, N-terminal domain"/>
    <property type="match status" value="1"/>
</dbReference>
<dbReference type="Gene3D" id="3.40.50.300">
    <property type="entry name" value="P-loop containing nucleotide triphosphate hydrolases"/>
    <property type="match status" value="3"/>
</dbReference>
<dbReference type="InterPro" id="IPR003593">
    <property type="entry name" value="AAA+_ATPase"/>
</dbReference>
<dbReference type="InterPro" id="IPR003959">
    <property type="entry name" value="ATPase_AAA_core"/>
</dbReference>
<dbReference type="InterPro" id="IPR017730">
    <property type="entry name" value="Chaperonin_ClpB"/>
</dbReference>
<dbReference type="InterPro" id="IPR019489">
    <property type="entry name" value="Clp_ATPase_C"/>
</dbReference>
<dbReference type="InterPro" id="IPR036628">
    <property type="entry name" value="Clp_N_dom_sf"/>
</dbReference>
<dbReference type="InterPro" id="IPR004176">
    <property type="entry name" value="Clp_R_dom"/>
</dbReference>
<dbReference type="InterPro" id="IPR001270">
    <property type="entry name" value="ClpA/B"/>
</dbReference>
<dbReference type="InterPro" id="IPR018368">
    <property type="entry name" value="ClpA/B_CS1"/>
</dbReference>
<dbReference type="InterPro" id="IPR028299">
    <property type="entry name" value="ClpA/B_CS2"/>
</dbReference>
<dbReference type="InterPro" id="IPR041546">
    <property type="entry name" value="ClpA/ClpB_AAA_lid"/>
</dbReference>
<dbReference type="InterPro" id="IPR050130">
    <property type="entry name" value="ClpA_ClpB"/>
</dbReference>
<dbReference type="InterPro" id="IPR027417">
    <property type="entry name" value="P-loop_NTPase"/>
</dbReference>
<dbReference type="NCBIfam" id="TIGR03346">
    <property type="entry name" value="chaperone_ClpB"/>
    <property type="match status" value="1"/>
</dbReference>
<dbReference type="PANTHER" id="PTHR11638">
    <property type="entry name" value="ATP-DEPENDENT CLP PROTEASE"/>
    <property type="match status" value="1"/>
</dbReference>
<dbReference type="PANTHER" id="PTHR11638:SF18">
    <property type="entry name" value="HEAT SHOCK PROTEIN 104"/>
    <property type="match status" value="1"/>
</dbReference>
<dbReference type="Pfam" id="PF00004">
    <property type="entry name" value="AAA"/>
    <property type="match status" value="1"/>
</dbReference>
<dbReference type="Pfam" id="PF07724">
    <property type="entry name" value="AAA_2"/>
    <property type="match status" value="1"/>
</dbReference>
<dbReference type="Pfam" id="PF17871">
    <property type="entry name" value="AAA_lid_9"/>
    <property type="match status" value="1"/>
</dbReference>
<dbReference type="Pfam" id="PF02861">
    <property type="entry name" value="Clp_N"/>
    <property type="match status" value="2"/>
</dbReference>
<dbReference type="Pfam" id="PF10431">
    <property type="entry name" value="ClpB_D2-small"/>
    <property type="match status" value="1"/>
</dbReference>
<dbReference type="PRINTS" id="PR00300">
    <property type="entry name" value="CLPPROTEASEA"/>
</dbReference>
<dbReference type="SMART" id="SM00382">
    <property type="entry name" value="AAA"/>
    <property type="match status" value="2"/>
</dbReference>
<dbReference type="SMART" id="SM01086">
    <property type="entry name" value="ClpB_D2-small"/>
    <property type="match status" value="1"/>
</dbReference>
<dbReference type="SUPFAM" id="SSF81923">
    <property type="entry name" value="Double Clp-N motif"/>
    <property type="match status" value="1"/>
</dbReference>
<dbReference type="SUPFAM" id="SSF52540">
    <property type="entry name" value="P-loop containing nucleoside triphosphate hydrolases"/>
    <property type="match status" value="2"/>
</dbReference>
<dbReference type="PROSITE" id="PS51903">
    <property type="entry name" value="CLP_R"/>
    <property type="match status" value="1"/>
</dbReference>
<dbReference type="PROSITE" id="PS00870">
    <property type="entry name" value="CLPAB_1"/>
    <property type="match status" value="1"/>
</dbReference>
<dbReference type="PROSITE" id="PS00871">
    <property type="entry name" value="CLPAB_2"/>
    <property type="match status" value="1"/>
</dbReference>
<evidence type="ECO:0000250" key="1"/>
<evidence type="ECO:0000255" key="2">
    <source>
        <dbReference type="PROSITE-ProRule" id="PRU01251"/>
    </source>
</evidence>
<evidence type="ECO:0000256" key="3">
    <source>
        <dbReference type="SAM" id="MobiDB-lite"/>
    </source>
</evidence>
<evidence type="ECO:0000305" key="4"/>
<reference key="1">
    <citation type="journal article" date="2004" name="Proc. Natl. Acad. Sci. U.S.A.">
        <title>Complete genomes of two clinical Staphylococcus aureus strains: evidence for the rapid evolution of virulence and drug resistance.</title>
        <authorList>
            <person name="Holden M.T.G."/>
            <person name="Feil E.J."/>
            <person name="Lindsay J.A."/>
            <person name="Peacock S.J."/>
            <person name="Day N.P.J."/>
            <person name="Enright M.C."/>
            <person name="Foster T.J."/>
            <person name="Moore C.E."/>
            <person name="Hurst L."/>
            <person name="Atkin R."/>
            <person name="Barron A."/>
            <person name="Bason N."/>
            <person name="Bentley S.D."/>
            <person name="Chillingworth C."/>
            <person name="Chillingworth T."/>
            <person name="Churcher C."/>
            <person name="Clark L."/>
            <person name="Corton C."/>
            <person name="Cronin A."/>
            <person name="Doggett J."/>
            <person name="Dowd L."/>
            <person name="Feltwell T."/>
            <person name="Hance Z."/>
            <person name="Harris B."/>
            <person name="Hauser H."/>
            <person name="Holroyd S."/>
            <person name="Jagels K."/>
            <person name="James K.D."/>
            <person name="Lennard N."/>
            <person name="Line A."/>
            <person name="Mayes R."/>
            <person name="Moule S."/>
            <person name="Mungall K."/>
            <person name="Ormond D."/>
            <person name="Quail M.A."/>
            <person name="Rabbinowitsch E."/>
            <person name="Rutherford K.M."/>
            <person name="Sanders M."/>
            <person name="Sharp S."/>
            <person name="Simmonds M."/>
            <person name="Stevens K."/>
            <person name="Whitehead S."/>
            <person name="Barrell B.G."/>
            <person name="Spratt B.G."/>
            <person name="Parkhill J."/>
        </authorList>
    </citation>
    <scope>NUCLEOTIDE SEQUENCE [LARGE SCALE GENOMIC DNA]</scope>
    <source>
        <strain>MRSA252</strain>
    </source>
</reference>
<feature type="chain" id="PRO_0000191178" description="Chaperone protein ClpB">
    <location>
        <begin position="1"/>
        <end position="869"/>
    </location>
</feature>
<feature type="domain" description="Clp R" evidence="2">
    <location>
        <begin position="3"/>
        <end position="145"/>
    </location>
</feature>
<feature type="region of interest" description="Repeat 1" evidence="2">
    <location>
        <begin position="6"/>
        <end position="71"/>
    </location>
</feature>
<feature type="region of interest" description="Repeat 2" evidence="2">
    <location>
        <begin position="85"/>
        <end position="145"/>
    </location>
</feature>
<feature type="region of interest" description="NBD1" evidence="1">
    <location>
        <begin position="158"/>
        <end position="339"/>
    </location>
</feature>
<feature type="region of interest" description="Linker" evidence="1">
    <location>
        <begin position="340"/>
        <end position="549"/>
    </location>
</feature>
<feature type="region of interest" description="Disordered" evidence="3">
    <location>
        <begin position="447"/>
        <end position="468"/>
    </location>
</feature>
<feature type="region of interest" description="NBD2" evidence="1">
    <location>
        <begin position="559"/>
        <end position="771"/>
    </location>
</feature>
<feature type="region of interest" description="C-terminal" evidence="1">
    <location>
        <begin position="772"/>
        <end position="869"/>
    </location>
</feature>
<feature type="coiled-coil region" evidence="1">
    <location>
        <begin position="390"/>
        <end position="524"/>
    </location>
</feature>
<feature type="binding site" evidence="1">
    <location>
        <begin position="205"/>
        <end position="212"/>
    </location>
    <ligand>
        <name>ATP</name>
        <dbReference type="ChEBI" id="CHEBI:30616"/>
        <label>1</label>
    </ligand>
</feature>
<feature type="binding site" evidence="1">
    <location>
        <begin position="609"/>
        <end position="616"/>
    </location>
    <ligand>
        <name>ATP</name>
        <dbReference type="ChEBI" id="CHEBI:30616"/>
        <label>2</label>
    </ligand>
</feature>
<gene>
    <name type="primary">clpB</name>
    <name type="ordered locus">SAR0938</name>
</gene>